<keyword id="KW-0119">Carbohydrate metabolism</keyword>
<keyword id="KW-0963">Cytoplasm</keyword>
<keyword id="KW-0378">Hydrolase</keyword>
<keyword id="KW-0460">Magnesium</keyword>
<keyword id="KW-0479">Metal-binding</keyword>
<proteinExistence type="inferred from homology"/>
<accession>P22780</accession>
<accession>Q79D81</accession>
<feature type="chain" id="PRO_0000200488" description="Fructose-1,6-bisphosphatase class 1 2">
    <location>
        <begin position="1"/>
        <end position="331"/>
    </location>
</feature>
<feature type="binding site" evidence="1">
    <location>
        <position position="80"/>
    </location>
    <ligand>
        <name>Mg(2+)</name>
        <dbReference type="ChEBI" id="CHEBI:18420"/>
        <label>1</label>
    </ligand>
</feature>
<feature type="binding site" evidence="1">
    <location>
        <position position="98"/>
    </location>
    <ligand>
        <name>Mg(2+)</name>
        <dbReference type="ChEBI" id="CHEBI:18420"/>
        <label>1</label>
    </ligand>
</feature>
<feature type="binding site" evidence="1">
    <location>
        <position position="98"/>
    </location>
    <ligand>
        <name>Mg(2+)</name>
        <dbReference type="ChEBI" id="CHEBI:18420"/>
        <label>2</label>
    </ligand>
</feature>
<feature type="binding site" evidence="1">
    <location>
        <position position="100"/>
    </location>
    <ligand>
        <name>Mg(2+)</name>
        <dbReference type="ChEBI" id="CHEBI:18420"/>
        <label>1</label>
    </ligand>
</feature>
<feature type="binding site" evidence="1">
    <location>
        <begin position="101"/>
        <end position="104"/>
    </location>
    <ligand>
        <name>substrate</name>
    </ligand>
</feature>
<feature type="binding site" evidence="1">
    <location>
        <position position="101"/>
    </location>
    <ligand>
        <name>Mg(2+)</name>
        <dbReference type="ChEBI" id="CHEBI:18420"/>
        <label>2</label>
    </ligand>
</feature>
<feature type="binding site" evidence="1">
    <location>
        <position position="189"/>
    </location>
    <ligand>
        <name>substrate</name>
    </ligand>
</feature>
<feature type="binding site" evidence="1">
    <location>
        <position position="261"/>
    </location>
    <ligand>
        <name>Mg(2+)</name>
        <dbReference type="ChEBI" id="CHEBI:18420"/>
        <label>2</label>
    </ligand>
</feature>
<evidence type="ECO:0000255" key="1">
    <source>
        <dbReference type="HAMAP-Rule" id="MF_01855"/>
    </source>
</evidence>
<dbReference type="EC" id="3.1.3.11" evidence="1"/>
<dbReference type="EMBL" id="J02922">
    <property type="protein sequence ID" value="AAA26105.1"/>
    <property type="molecule type" value="Genomic_DNA"/>
</dbReference>
<dbReference type="EMBL" id="U12430">
    <property type="protein sequence ID" value="AAA65078.1"/>
    <property type="molecule type" value="Genomic_DNA"/>
</dbReference>
<dbReference type="PIR" id="A35819">
    <property type="entry name" value="A35819"/>
</dbReference>
<dbReference type="RefSeq" id="WP_011339166.1">
    <property type="nucleotide sequence ID" value="NZ_WSNV01000195.1"/>
</dbReference>
<dbReference type="SMR" id="P22780"/>
<dbReference type="UniPathway" id="UPA00138"/>
<dbReference type="GO" id="GO:0005829">
    <property type="term" value="C:cytosol"/>
    <property type="evidence" value="ECO:0007669"/>
    <property type="project" value="TreeGrafter"/>
</dbReference>
<dbReference type="GO" id="GO:0042132">
    <property type="term" value="F:fructose 1,6-bisphosphate 1-phosphatase activity"/>
    <property type="evidence" value="ECO:0007669"/>
    <property type="project" value="UniProtKB-UniRule"/>
</dbReference>
<dbReference type="GO" id="GO:0000287">
    <property type="term" value="F:magnesium ion binding"/>
    <property type="evidence" value="ECO:0007669"/>
    <property type="project" value="UniProtKB-UniRule"/>
</dbReference>
<dbReference type="GO" id="GO:0030388">
    <property type="term" value="P:fructose 1,6-bisphosphate metabolic process"/>
    <property type="evidence" value="ECO:0007669"/>
    <property type="project" value="TreeGrafter"/>
</dbReference>
<dbReference type="GO" id="GO:0006002">
    <property type="term" value="P:fructose 6-phosphate metabolic process"/>
    <property type="evidence" value="ECO:0007669"/>
    <property type="project" value="TreeGrafter"/>
</dbReference>
<dbReference type="GO" id="GO:0006000">
    <property type="term" value="P:fructose metabolic process"/>
    <property type="evidence" value="ECO:0007669"/>
    <property type="project" value="TreeGrafter"/>
</dbReference>
<dbReference type="GO" id="GO:0006094">
    <property type="term" value="P:gluconeogenesis"/>
    <property type="evidence" value="ECO:0007669"/>
    <property type="project" value="UniProtKB-UniRule"/>
</dbReference>
<dbReference type="GO" id="GO:0005986">
    <property type="term" value="P:sucrose biosynthetic process"/>
    <property type="evidence" value="ECO:0007669"/>
    <property type="project" value="TreeGrafter"/>
</dbReference>
<dbReference type="CDD" id="cd00354">
    <property type="entry name" value="FBPase"/>
    <property type="match status" value="1"/>
</dbReference>
<dbReference type="Gene3D" id="3.40.190.80">
    <property type="match status" value="1"/>
</dbReference>
<dbReference type="Gene3D" id="3.30.540.10">
    <property type="entry name" value="Fructose-1,6-Bisphosphatase, subunit A, domain 1"/>
    <property type="match status" value="1"/>
</dbReference>
<dbReference type="HAMAP" id="MF_01855">
    <property type="entry name" value="FBPase_class1"/>
    <property type="match status" value="1"/>
</dbReference>
<dbReference type="InterPro" id="IPR044015">
    <property type="entry name" value="FBPase_C_dom"/>
</dbReference>
<dbReference type="InterPro" id="IPR000146">
    <property type="entry name" value="FBPase_class-1"/>
</dbReference>
<dbReference type="InterPro" id="IPR033391">
    <property type="entry name" value="FBPase_N"/>
</dbReference>
<dbReference type="InterPro" id="IPR028343">
    <property type="entry name" value="FBPtase"/>
</dbReference>
<dbReference type="InterPro" id="IPR020548">
    <property type="entry name" value="Fructose_bisphosphatase_AS"/>
</dbReference>
<dbReference type="NCBIfam" id="NF006780">
    <property type="entry name" value="PRK09293.1-4"/>
    <property type="match status" value="1"/>
</dbReference>
<dbReference type="PANTHER" id="PTHR11556">
    <property type="entry name" value="FRUCTOSE-1,6-BISPHOSPHATASE-RELATED"/>
    <property type="match status" value="1"/>
</dbReference>
<dbReference type="PANTHER" id="PTHR11556:SF35">
    <property type="entry name" value="SEDOHEPTULOSE-1,7-BISPHOSPHATASE, CHLOROPLASTIC"/>
    <property type="match status" value="1"/>
</dbReference>
<dbReference type="Pfam" id="PF00316">
    <property type="entry name" value="FBPase"/>
    <property type="match status" value="1"/>
</dbReference>
<dbReference type="Pfam" id="PF18913">
    <property type="entry name" value="FBPase_C"/>
    <property type="match status" value="1"/>
</dbReference>
<dbReference type="PIRSF" id="PIRSF500210">
    <property type="entry name" value="FBPtase"/>
    <property type="match status" value="1"/>
</dbReference>
<dbReference type="PIRSF" id="PIRSF000904">
    <property type="entry name" value="FBPtase_SBPase"/>
    <property type="match status" value="1"/>
</dbReference>
<dbReference type="PRINTS" id="PR00115">
    <property type="entry name" value="F16BPHPHTASE"/>
</dbReference>
<dbReference type="SUPFAM" id="SSF56655">
    <property type="entry name" value="Carbohydrate phosphatase"/>
    <property type="match status" value="1"/>
</dbReference>
<dbReference type="PROSITE" id="PS00124">
    <property type="entry name" value="FBPASE"/>
    <property type="match status" value="1"/>
</dbReference>
<organism>
    <name type="scientific">Cereibacter sphaeroides</name>
    <name type="common">Rhodobacter sphaeroides</name>
    <dbReference type="NCBI Taxonomy" id="1063"/>
    <lineage>
        <taxon>Bacteria</taxon>
        <taxon>Pseudomonadati</taxon>
        <taxon>Pseudomonadota</taxon>
        <taxon>Alphaproteobacteria</taxon>
        <taxon>Rhodobacterales</taxon>
        <taxon>Paracoccaceae</taxon>
        <taxon>Cereibacter</taxon>
    </lineage>
</organism>
<name>F16A2_CERSP</name>
<gene>
    <name evidence="1" type="primary">fbp2</name>
    <name type="synonym">fbpB</name>
</gene>
<comment type="catalytic activity">
    <reaction evidence="1">
        <text>beta-D-fructose 1,6-bisphosphate + H2O = beta-D-fructose 6-phosphate + phosphate</text>
        <dbReference type="Rhea" id="RHEA:11064"/>
        <dbReference type="ChEBI" id="CHEBI:15377"/>
        <dbReference type="ChEBI" id="CHEBI:32966"/>
        <dbReference type="ChEBI" id="CHEBI:43474"/>
        <dbReference type="ChEBI" id="CHEBI:57634"/>
        <dbReference type="EC" id="3.1.3.11"/>
    </reaction>
</comment>
<comment type="cofactor">
    <cofactor evidence="1">
        <name>Mg(2+)</name>
        <dbReference type="ChEBI" id="CHEBI:18420"/>
    </cofactor>
    <text evidence="1">Binds 2 magnesium ions per subunit.</text>
</comment>
<comment type="activity regulation">
    <text>Fructose-1,6-bisphosphatase II is not light-activated.</text>
</comment>
<comment type="pathway">
    <text evidence="1">Carbohydrate biosynthesis; gluconeogenesis.</text>
</comment>
<comment type="subunit">
    <text evidence="1">Homotetramer.</text>
</comment>
<comment type="subcellular location">
    <subcellularLocation>
        <location evidence="1">Cytoplasm</location>
    </subcellularLocation>
</comment>
<comment type="miscellaneous">
    <text>There are two genes for FBPase in R.sphaeroides.</text>
</comment>
<comment type="similarity">
    <text evidence="1">Belongs to the FBPase class 1 family.</text>
</comment>
<reference key="1">
    <citation type="journal article" date="1990" name="Biochemistry">
        <title>The form II fructose 1,6-bisphosphatase and phosphoribulokinase genes form part of a large operon in Rhodobacter sphaeroides: primary structure and insertional mutagenesis analysis.</title>
        <authorList>
            <person name="Gibson J.L."/>
            <person name="Chen J.-H."/>
            <person name="Tower P.A."/>
            <person name="Tabita F.R."/>
        </authorList>
    </citation>
    <scope>NUCLEOTIDE SEQUENCE [GENOMIC DNA]</scope>
</reference>
<reference key="2">
    <citation type="journal article" date="1994" name="J. Bacteriol.">
        <title>Positive and negative regulation of sequences upstream of the form II cbb CO2 fixation operon of Rhodobacter sphaeroides.</title>
        <authorList>
            <person name="Xu H.H."/>
            <person name="Tabita F.R."/>
        </authorList>
    </citation>
    <scope>NUCLEOTIDE SEQUENCE [GENOMIC DNA] OF 1-42</scope>
    <source>
        <strain>HR</strain>
    </source>
</reference>
<sequence>MAIELEDLGLSPDVADVMQRLARVGAGIARIISRNGLERDLGAGVGTNAGGDGQKALDVIADDAFRAALEGSAVAYYASEEQDEVVTLGEGSLALAIDPLDGSSNIDVNVSIGTIFSIFPAAAGPEASFLRPGTEQIAGGYIIYGPQCALVCSFGQGVQHWVLDLDAGIFRRMPDIRPLPAETSEFAINASNYRHWPQPIRAFVDDLVAGAEGPRGKNFNMRWIASLVAETHRILMRGGVFLYPGDERKGYERGRLRHVYECAPIAFLIANVGGGATDGCADILTALPDRLHARTPFVFGCASKVARVAAYHDLACEETSALFGSRGLFRS</sequence>
<protein>
    <recommendedName>
        <fullName evidence="1">Fructose-1,6-bisphosphatase class 1 2</fullName>
        <shortName evidence="1">FBPase class 1 2</shortName>
        <ecNumber evidence="1">3.1.3.11</ecNumber>
    </recommendedName>
    <alternativeName>
        <fullName evidence="1">D-fructose-1,6-bisphosphate 1-phosphohydrolase class 1 2</fullName>
    </alternativeName>
</protein>